<name>LPLT_ECOK1</name>
<evidence type="ECO:0000255" key="1">
    <source>
        <dbReference type="HAMAP-Rule" id="MF_01585"/>
    </source>
</evidence>
<organism>
    <name type="scientific">Escherichia coli O1:K1 / APEC</name>
    <dbReference type="NCBI Taxonomy" id="405955"/>
    <lineage>
        <taxon>Bacteria</taxon>
        <taxon>Pseudomonadati</taxon>
        <taxon>Pseudomonadota</taxon>
        <taxon>Gammaproteobacteria</taxon>
        <taxon>Enterobacterales</taxon>
        <taxon>Enterobacteriaceae</taxon>
        <taxon>Escherichia</taxon>
    </lineage>
</organism>
<comment type="function">
    <text evidence="1">Catalyzes the facilitated diffusion of 2-acyl-glycero-3-phosphoethanolamine (2-acyl-GPE) into the cell.</text>
</comment>
<comment type="subcellular location">
    <subcellularLocation>
        <location evidence="1">Cell inner membrane</location>
        <topology evidence="1">Multi-pass membrane protein</topology>
    </subcellularLocation>
</comment>
<comment type="similarity">
    <text evidence="1">Belongs to the major facilitator superfamily. LplT (TC 2.A.1.42) family.</text>
</comment>
<accession>A1AF46</accession>
<dbReference type="EMBL" id="CP000468">
    <property type="protein sequence ID" value="ABJ02286.1"/>
    <property type="molecule type" value="Genomic_DNA"/>
</dbReference>
<dbReference type="RefSeq" id="WP_000004601.1">
    <property type="nucleotide sequence ID" value="NZ_CADILS010000010.1"/>
</dbReference>
<dbReference type="SMR" id="A1AF46"/>
<dbReference type="KEGG" id="ecv:APECO1_3671"/>
<dbReference type="HOGENOM" id="CLU_047399_0_0_6"/>
<dbReference type="Proteomes" id="UP000008216">
    <property type="component" value="Chromosome"/>
</dbReference>
<dbReference type="GO" id="GO:0005886">
    <property type="term" value="C:plasma membrane"/>
    <property type="evidence" value="ECO:0007669"/>
    <property type="project" value="UniProtKB-SubCell"/>
</dbReference>
<dbReference type="GO" id="GO:0051978">
    <property type="term" value="F:lysophospholipid:sodium symporter activity"/>
    <property type="evidence" value="ECO:0007669"/>
    <property type="project" value="InterPro"/>
</dbReference>
<dbReference type="CDD" id="cd06173">
    <property type="entry name" value="MFS_MefA_like"/>
    <property type="match status" value="1"/>
</dbReference>
<dbReference type="FunFam" id="1.20.1250.20:FF:000091">
    <property type="entry name" value="Lysophospholipid transporter LplT"/>
    <property type="match status" value="1"/>
</dbReference>
<dbReference type="Gene3D" id="1.20.1250.20">
    <property type="entry name" value="MFS general substrate transporter like domains"/>
    <property type="match status" value="1"/>
</dbReference>
<dbReference type="HAMAP" id="MF_01585">
    <property type="entry name" value="MFS_LplT"/>
    <property type="match status" value="1"/>
</dbReference>
<dbReference type="InterPro" id="IPR023727">
    <property type="entry name" value="LysoPLipid__transptr_LplT"/>
</dbReference>
<dbReference type="InterPro" id="IPR011701">
    <property type="entry name" value="MFS"/>
</dbReference>
<dbReference type="InterPro" id="IPR036259">
    <property type="entry name" value="MFS_trans_sf"/>
</dbReference>
<dbReference type="NCBIfam" id="NF008397">
    <property type="entry name" value="PRK11195.1"/>
    <property type="match status" value="1"/>
</dbReference>
<dbReference type="PANTHER" id="PTHR43266">
    <property type="entry name" value="MACROLIDE-EFFLUX PROTEIN"/>
    <property type="match status" value="1"/>
</dbReference>
<dbReference type="PANTHER" id="PTHR43266:SF2">
    <property type="entry name" value="MAJOR FACILITATOR SUPERFAMILY (MFS) PROFILE DOMAIN-CONTAINING PROTEIN"/>
    <property type="match status" value="1"/>
</dbReference>
<dbReference type="Pfam" id="PF07690">
    <property type="entry name" value="MFS_1"/>
    <property type="match status" value="1"/>
</dbReference>
<dbReference type="SUPFAM" id="SSF103473">
    <property type="entry name" value="MFS general substrate transporter"/>
    <property type="match status" value="1"/>
</dbReference>
<feature type="chain" id="PRO_0000309826" description="Lysophospholipid transporter LplT">
    <location>
        <begin position="1"/>
        <end position="397"/>
    </location>
</feature>
<feature type="topological domain" description="Periplasmic" evidence="1">
    <location>
        <begin position="1"/>
        <end position="17"/>
    </location>
</feature>
<feature type="transmembrane region" description="Helical" evidence="1">
    <location>
        <begin position="18"/>
        <end position="38"/>
    </location>
</feature>
<feature type="topological domain" description="Cytoplasmic" evidence="1">
    <location>
        <begin position="39"/>
        <end position="52"/>
    </location>
</feature>
<feature type="transmembrane region" description="Helical" evidence="1">
    <location>
        <begin position="53"/>
        <end position="73"/>
    </location>
</feature>
<feature type="topological domain" description="Periplasmic" evidence="1">
    <location>
        <begin position="74"/>
        <end position="90"/>
    </location>
</feature>
<feature type="transmembrane region" description="Helical" evidence="1">
    <location>
        <begin position="91"/>
        <end position="111"/>
    </location>
</feature>
<feature type="topological domain" description="Cytoplasmic" evidence="1">
    <location>
        <begin position="112"/>
        <end position="144"/>
    </location>
</feature>
<feature type="transmembrane region" description="Helical" evidence="1">
    <location>
        <begin position="145"/>
        <end position="165"/>
    </location>
</feature>
<feature type="topological domain" description="Periplasmic" evidence="1">
    <location>
        <position position="166"/>
    </location>
</feature>
<feature type="transmembrane region" description="Helical" evidence="1">
    <location>
        <begin position="167"/>
        <end position="187"/>
    </location>
</feature>
<feature type="topological domain" description="Cytoplasmic" evidence="1">
    <location>
        <begin position="188"/>
        <end position="226"/>
    </location>
</feature>
<feature type="transmembrane region" description="Helical" evidence="1">
    <location>
        <begin position="227"/>
        <end position="247"/>
    </location>
</feature>
<feature type="topological domain" description="Periplasmic" evidence="1">
    <location>
        <begin position="248"/>
        <end position="256"/>
    </location>
</feature>
<feature type="transmembrane region" description="Helical" evidence="1">
    <location>
        <begin position="257"/>
        <end position="277"/>
    </location>
</feature>
<feature type="topological domain" description="Cytoplasmic" evidence="1">
    <location>
        <begin position="278"/>
        <end position="280"/>
    </location>
</feature>
<feature type="transmembrane region" description="Helical" evidence="1">
    <location>
        <begin position="281"/>
        <end position="301"/>
    </location>
</feature>
<feature type="topological domain" description="Periplasmic" evidence="1">
    <location>
        <begin position="302"/>
        <end position="304"/>
    </location>
</feature>
<feature type="transmembrane region" description="Helical" evidence="1">
    <location>
        <begin position="305"/>
        <end position="325"/>
    </location>
</feature>
<feature type="topological domain" description="Cytoplasmic" evidence="1">
    <location>
        <begin position="326"/>
        <end position="343"/>
    </location>
</feature>
<feature type="transmembrane region" description="Helical" evidence="1">
    <location>
        <begin position="344"/>
        <end position="364"/>
    </location>
</feature>
<feature type="topological domain" description="Periplasmic" evidence="1">
    <location>
        <begin position="365"/>
        <end position="366"/>
    </location>
</feature>
<feature type="transmembrane region" description="Helical" evidence="1">
    <location>
        <begin position="367"/>
        <end position="387"/>
    </location>
</feature>
<feature type="topological domain" description="Cytoplasmic" evidence="1">
    <location>
        <begin position="388"/>
        <end position="397"/>
    </location>
</feature>
<protein>
    <recommendedName>
        <fullName evidence="1">Lysophospholipid transporter LplT</fullName>
    </recommendedName>
</protein>
<reference key="1">
    <citation type="journal article" date="2007" name="J. Bacteriol.">
        <title>The genome sequence of avian pathogenic Escherichia coli strain O1:K1:H7 shares strong similarities with human extraintestinal pathogenic E. coli genomes.</title>
        <authorList>
            <person name="Johnson T.J."/>
            <person name="Kariyawasam S."/>
            <person name="Wannemuehler Y."/>
            <person name="Mangiamele P."/>
            <person name="Johnson S.J."/>
            <person name="Doetkott C."/>
            <person name="Skyberg J.A."/>
            <person name="Lynne A.M."/>
            <person name="Johnson J.R."/>
            <person name="Nolan L.K."/>
        </authorList>
    </citation>
    <scope>NUCLEOTIDE SEQUENCE [LARGE SCALE GENOMIC DNA]</scope>
</reference>
<gene>
    <name evidence="1" type="primary">lplT</name>
    <name type="ordered locus">Ecok1_27920</name>
    <name type="ORF">APECO1_3671</name>
</gene>
<proteinExistence type="inferred from homology"/>
<sequence length="397" mass="41639">MSESVHTNTSLWSKGMKAVIVAQFLSAFGDNALLFATLALLKAQFYPEWSQPILQMVFVGAYILFAPFVGQVADSFAKGRVMMFANGLKLLGAASICFGINPFLGYTLVGVGAAAYSPAKYGILGELTTGSKLVKANGLMEASTIAAILLGSVAGGVLADWHILVALVACALAYGGAVVANIYIPKLAAARPGQSWNLISMTRSFLNACTSLWRNGETRFSLVGTSLFWGAGVTLRFLLVLWVPVALGITDNATPTYLNAMVAIGIVVGAGAAAKLVTLETVSRCMPAGILIGVVVLIFSLQHELLPAYALLMLIGVLGGFFVVPLNALLQERGKKSVGAGNAIAVQNLGENSAMLLMLGIYSLAVMVGIPVVPIGIGFGALFALAITALWIWQRRH</sequence>
<keyword id="KW-0997">Cell inner membrane</keyword>
<keyword id="KW-1003">Cell membrane</keyword>
<keyword id="KW-0445">Lipid transport</keyword>
<keyword id="KW-0472">Membrane</keyword>
<keyword id="KW-1185">Reference proteome</keyword>
<keyword id="KW-0812">Transmembrane</keyword>
<keyword id="KW-1133">Transmembrane helix</keyword>
<keyword id="KW-0813">Transport</keyword>